<gene>
    <name evidence="1" type="primary">kdpA</name>
    <name type="ordered locus">Acid_0073</name>
</gene>
<sequence>MTTNGILQILAFTAIIWALAKPIGGFMAKVFAGERTWLHRILRPVEVAIYKLCGVDEAAEQRWTGYAGSLLAFSLVSLLFTYLIQRVQQWLPLNPQGLANVAADLGWNTAASFTTNTNWQAYTPETTMSYITQMIALATHNFFSAAAGIAVAIAFVRGFSRHSANTLGNFWVDFTRATLYILLPMSLLAALFFCSQGVIQNLDPYTKVTTLEGAVQTIPQGPVASQEAIKMLGTNGGGFFNANSAHPYENPTPLANLAQMVLIFLIPAGLTYTFGKMIKDTRQGWALLAAMTVLFLAGVCVVYPAEQAGNPVITRLGVAGGNMEGKEVRFGIANSALFTVVTTDASCGAVNNVHDSLTPLGGLVPLVNIELGEVVFGGVGSGLYGMLLFAILAVFIAGLMVGRTPEYLGKKIEQKEVKMVMLSVLVLALCILGFSAAGIGQQTVANSMTNHGPHGLTEVLYGYTSAAGNNGSAFAGLSANTMYLNTTLGIAMLCGRFLMLIPLLAAAGSLAQKKLVPVSAGTFPTHGPLFVTLLVGVVVIVGALTFFPALSLGPIVEHFLMHQGRLWS</sequence>
<protein>
    <recommendedName>
        <fullName evidence="1">Potassium-transporting ATPase potassium-binding subunit</fullName>
    </recommendedName>
    <alternativeName>
        <fullName evidence="1">ATP phosphohydrolase [potassium-transporting] A chain</fullName>
    </alternativeName>
    <alternativeName>
        <fullName evidence="1">Potassium-binding and translocating subunit A</fullName>
    </alternativeName>
    <alternativeName>
        <fullName evidence="1">Potassium-translocating ATPase A chain</fullName>
    </alternativeName>
</protein>
<proteinExistence type="inferred from homology"/>
<reference key="1">
    <citation type="journal article" date="2009" name="Appl. Environ. Microbiol.">
        <title>Three genomes from the phylum Acidobacteria provide insight into the lifestyles of these microorganisms in soils.</title>
        <authorList>
            <person name="Ward N.L."/>
            <person name="Challacombe J.F."/>
            <person name="Janssen P.H."/>
            <person name="Henrissat B."/>
            <person name="Coutinho P.M."/>
            <person name="Wu M."/>
            <person name="Xie G."/>
            <person name="Haft D.H."/>
            <person name="Sait M."/>
            <person name="Badger J."/>
            <person name="Barabote R.D."/>
            <person name="Bradley B."/>
            <person name="Brettin T.S."/>
            <person name="Brinkac L.M."/>
            <person name="Bruce D."/>
            <person name="Creasy T."/>
            <person name="Daugherty S.C."/>
            <person name="Davidsen T.M."/>
            <person name="DeBoy R.T."/>
            <person name="Detter J.C."/>
            <person name="Dodson R.J."/>
            <person name="Durkin A.S."/>
            <person name="Ganapathy A."/>
            <person name="Gwinn-Giglio M."/>
            <person name="Han C.S."/>
            <person name="Khouri H."/>
            <person name="Kiss H."/>
            <person name="Kothari S.P."/>
            <person name="Madupu R."/>
            <person name="Nelson K.E."/>
            <person name="Nelson W.C."/>
            <person name="Paulsen I."/>
            <person name="Penn K."/>
            <person name="Ren Q."/>
            <person name="Rosovitz M.J."/>
            <person name="Selengut J.D."/>
            <person name="Shrivastava S."/>
            <person name="Sullivan S.A."/>
            <person name="Tapia R."/>
            <person name="Thompson L.S."/>
            <person name="Watkins K.L."/>
            <person name="Yang Q."/>
            <person name="Yu C."/>
            <person name="Zafar N."/>
            <person name="Zhou L."/>
            <person name="Kuske C.R."/>
        </authorList>
    </citation>
    <scope>NUCLEOTIDE SEQUENCE [LARGE SCALE GENOMIC DNA]</scope>
    <source>
        <strain>Ellin6076</strain>
    </source>
</reference>
<organism>
    <name type="scientific">Solibacter usitatus (strain Ellin6076)</name>
    <dbReference type="NCBI Taxonomy" id="234267"/>
    <lineage>
        <taxon>Bacteria</taxon>
        <taxon>Pseudomonadati</taxon>
        <taxon>Acidobacteriota</taxon>
        <taxon>Terriglobia</taxon>
        <taxon>Bryobacterales</taxon>
        <taxon>Solibacteraceae</taxon>
        <taxon>Candidatus Solibacter</taxon>
    </lineage>
</organism>
<keyword id="KW-0997">Cell inner membrane</keyword>
<keyword id="KW-1003">Cell membrane</keyword>
<keyword id="KW-0406">Ion transport</keyword>
<keyword id="KW-0472">Membrane</keyword>
<keyword id="KW-0630">Potassium</keyword>
<keyword id="KW-0633">Potassium transport</keyword>
<keyword id="KW-0812">Transmembrane</keyword>
<keyword id="KW-1133">Transmembrane helix</keyword>
<keyword id="KW-0813">Transport</keyword>
<name>KDPA_SOLUE</name>
<accession>Q02CX7</accession>
<feature type="chain" id="PRO_1000022246" description="Potassium-transporting ATPase potassium-binding subunit">
    <location>
        <begin position="1"/>
        <end position="568"/>
    </location>
</feature>
<feature type="transmembrane region" description="Helical" evidence="1">
    <location>
        <begin position="6"/>
        <end position="26"/>
    </location>
</feature>
<feature type="transmembrane region" description="Helical" evidence="1">
    <location>
        <begin position="64"/>
        <end position="84"/>
    </location>
</feature>
<feature type="transmembrane region" description="Helical" evidence="1">
    <location>
        <begin position="135"/>
        <end position="155"/>
    </location>
</feature>
<feature type="transmembrane region" description="Helical" evidence="1">
    <location>
        <begin position="179"/>
        <end position="199"/>
    </location>
</feature>
<feature type="transmembrane region" description="Helical" evidence="1">
    <location>
        <begin position="254"/>
        <end position="274"/>
    </location>
</feature>
<feature type="transmembrane region" description="Helical" evidence="1">
    <location>
        <begin position="285"/>
        <end position="305"/>
    </location>
</feature>
<feature type="transmembrane region" description="Helical" evidence="1">
    <location>
        <begin position="382"/>
        <end position="402"/>
    </location>
</feature>
<feature type="transmembrane region" description="Helical" evidence="1">
    <location>
        <begin position="419"/>
        <end position="439"/>
    </location>
</feature>
<feature type="transmembrane region" description="Helical" evidence="1">
    <location>
        <begin position="459"/>
        <end position="481"/>
    </location>
</feature>
<feature type="transmembrane region" description="Helical" evidence="1">
    <location>
        <begin position="488"/>
        <end position="508"/>
    </location>
</feature>
<feature type="transmembrane region" description="Helical" evidence="1">
    <location>
        <begin position="529"/>
        <end position="549"/>
    </location>
</feature>
<evidence type="ECO:0000255" key="1">
    <source>
        <dbReference type="HAMAP-Rule" id="MF_00275"/>
    </source>
</evidence>
<dbReference type="EMBL" id="CP000473">
    <property type="protein sequence ID" value="ABJ81089.1"/>
    <property type="molecule type" value="Genomic_DNA"/>
</dbReference>
<dbReference type="SMR" id="Q02CX7"/>
<dbReference type="FunCoup" id="Q02CX7">
    <property type="interactions" value="285"/>
</dbReference>
<dbReference type="STRING" id="234267.Acid_0073"/>
<dbReference type="KEGG" id="sus:Acid_0073"/>
<dbReference type="eggNOG" id="COG2060">
    <property type="taxonomic scope" value="Bacteria"/>
</dbReference>
<dbReference type="HOGENOM" id="CLU_018614_3_0_0"/>
<dbReference type="InParanoid" id="Q02CX7"/>
<dbReference type="OrthoDB" id="9763796at2"/>
<dbReference type="GO" id="GO:0005886">
    <property type="term" value="C:plasma membrane"/>
    <property type="evidence" value="ECO:0007669"/>
    <property type="project" value="UniProtKB-SubCell"/>
</dbReference>
<dbReference type="GO" id="GO:0008556">
    <property type="term" value="F:P-type potassium transmembrane transporter activity"/>
    <property type="evidence" value="ECO:0007669"/>
    <property type="project" value="InterPro"/>
</dbReference>
<dbReference type="GO" id="GO:0030955">
    <property type="term" value="F:potassium ion binding"/>
    <property type="evidence" value="ECO:0007669"/>
    <property type="project" value="UniProtKB-UniRule"/>
</dbReference>
<dbReference type="HAMAP" id="MF_00275">
    <property type="entry name" value="KdpA"/>
    <property type="match status" value="1"/>
</dbReference>
<dbReference type="InterPro" id="IPR004623">
    <property type="entry name" value="KdpA"/>
</dbReference>
<dbReference type="NCBIfam" id="TIGR00680">
    <property type="entry name" value="kdpA"/>
    <property type="match status" value="1"/>
</dbReference>
<dbReference type="PANTHER" id="PTHR30607">
    <property type="entry name" value="POTASSIUM-TRANSPORTING ATPASE A CHAIN"/>
    <property type="match status" value="1"/>
</dbReference>
<dbReference type="PANTHER" id="PTHR30607:SF2">
    <property type="entry name" value="POTASSIUM-TRANSPORTING ATPASE POTASSIUM-BINDING SUBUNIT"/>
    <property type="match status" value="1"/>
</dbReference>
<dbReference type="Pfam" id="PF03814">
    <property type="entry name" value="KdpA"/>
    <property type="match status" value="1"/>
</dbReference>
<dbReference type="PIRSF" id="PIRSF001294">
    <property type="entry name" value="K_ATPaseA"/>
    <property type="match status" value="1"/>
</dbReference>
<comment type="function">
    <text evidence="1">Part of the high-affinity ATP-driven potassium transport (or Kdp) system, which catalyzes the hydrolysis of ATP coupled with the electrogenic transport of potassium into the cytoplasm. This subunit binds the periplasmic potassium ions and delivers the ions to the membrane domain of KdpB through an intramembrane tunnel.</text>
</comment>
<comment type="subunit">
    <text evidence="1">The system is composed of three essential subunits: KdpA, KdpB and KdpC.</text>
</comment>
<comment type="subcellular location">
    <subcellularLocation>
        <location evidence="1">Cell inner membrane</location>
        <topology evidence="1">Multi-pass membrane protein</topology>
    </subcellularLocation>
</comment>
<comment type="similarity">
    <text evidence="1">Belongs to the KdpA family.</text>
</comment>